<organism>
    <name type="scientific">Haemophilus influenzae (strain ATCC 51907 / DSM 11121 / KW20 / Rd)</name>
    <dbReference type="NCBI Taxonomy" id="71421"/>
    <lineage>
        <taxon>Bacteria</taxon>
        <taxon>Pseudomonadati</taxon>
        <taxon>Pseudomonadota</taxon>
        <taxon>Gammaproteobacteria</taxon>
        <taxon>Pasteurellales</taxon>
        <taxon>Pasteurellaceae</taxon>
        <taxon>Haemophilus</taxon>
    </lineage>
</organism>
<keyword id="KW-0501">Molybdenum cofactor biosynthesis</keyword>
<keyword id="KW-0547">Nucleotide-binding</keyword>
<keyword id="KW-0597">Phosphoprotein</keyword>
<keyword id="KW-1185">Reference proteome</keyword>
<sequence length="81" mass="8826">MLNVLFFAQTRELIGVDAIQLEDDFATAEAVREHLAQKGDKWALALEKGKLLVAINQTLMPLESAVKNGDEIAFFPPVTGG</sequence>
<dbReference type="EMBL" id="L42023">
    <property type="protein sequence ID" value="AAC23319.1"/>
    <property type="molecule type" value="Genomic_DNA"/>
</dbReference>
<dbReference type="PIR" id="A59368">
    <property type="entry name" value="A59368"/>
</dbReference>
<dbReference type="RefSeq" id="NP_439816.1">
    <property type="nucleotide sequence ID" value="NC_000907.1"/>
</dbReference>
<dbReference type="SMR" id="P45309"/>
<dbReference type="STRING" id="71421.HI_1674"/>
<dbReference type="EnsemblBacteria" id="AAC23319">
    <property type="protein sequence ID" value="AAC23319"/>
    <property type="gene ID" value="HI_1674"/>
</dbReference>
<dbReference type="KEGG" id="hin:HI_1674"/>
<dbReference type="PATRIC" id="fig|71421.8.peg.1753"/>
<dbReference type="eggNOG" id="COG1977">
    <property type="taxonomic scope" value="Bacteria"/>
</dbReference>
<dbReference type="HOGENOM" id="CLU_114601_4_0_6"/>
<dbReference type="OrthoDB" id="9801945at2"/>
<dbReference type="PhylomeDB" id="P45309"/>
<dbReference type="BioCyc" id="HINF71421:G1GJ1-1689-MONOMER"/>
<dbReference type="UniPathway" id="UPA00344"/>
<dbReference type="Proteomes" id="UP000000579">
    <property type="component" value="Chromosome"/>
</dbReference>
<dbReference type="GO" id="GO:1990133">
    <property type="term" value="C:molybdopterin adenylyltransferase complex"/>
    <property type="evidence" value="ECO:0000318"/>
    <property type="project" value="GO_Central"/>
</dbReference>
<dbReference type="GO" id="GO:0000166">
    <property type="term" value="F:nucleotide binding"/>
    <property type="evidence" value="ECO:0007669"/>
    <property type="project" value="UniProtKB-KW"/>
</dbReference>
<dbReference type="GO" id="GO:0006777">
    <property type="term" value="P:Mo-molybdopterin cofactor biosynthetic process"/>
    <property type="evidence" value="ECO:0000318"/>
    <property type="project" value="GO_Central"/>
</dbReference>
<dbReference type="CDD" id="cd00754">
    <property type="entry name" value="Ubl_MoaD"/>
    <property type="match status" value="1"/>
</dbReference>
<dbReference type="FunFam" id="3.10.20.30:FF:000010">
    <property type="entry name" value="Molybdopterin synthase sulfur carrier subunit"/>
    <property type="match status" value="1"/>
</dbReference>
<dbReference type="Gene3D" id="3.10.20.30">
    <property type="match status" value="1"/>
</dbReference>
<dbReference type="InterPro" id="IPR012675">
    <property type="entry name" value="Beta-grasp_dom_sf"/>
</dbReference>
<dbReference type="InterPro" id="IPR044672">
    <property type="entry name" value="MOCS2A"/>
</dbReference>
<dbReference type="InterPro" id="IPR016155">
    <property type="entry name" value="Mopterin_synth/thiamin_S_b"/>
</dbReference>
<dbReference type="InterPro" id="IPR003749">
    <property type="entry name" value="ThiS/MoaD-like"/>
</dbReference>
<dbReference type="NCBIfam" id="TIGR01682">
    <property type="entry name" value="moaD"/>
    <property type="match status" value="1"/>
</dbReference>
<dbReference type="NCBIfam" id="NF008347">
    <property type="entry name" value="PRK11130.1"/>
    <property type="match status" value="1"/>
</dbReference>
<dbReference type="PANTHER" id="PTHR33359">
    <property type="entry name" value="MOLYBDOPTERIN SYNTHASE SULFUR CARRIER SUBUNIT"/>
    <property type="match status" value="1"/>
</dbReference>
<dbReference type="PANTHER" id="PTHR33359:SF1">
    <property type="entry name" value="MOLYBDOPTERIN SYNTHASE SULFUR CARRIER SUBUNIT"/>
    <property type="match status" value="1"/>
</dbReference>
<dbReference type="Pfam" id="PF02597">
    <property type="entry name" value="ThiS"/>
    <property type="match status" value="1"/>
</dbReference>
<dbReference type="SUPFAM" id="SSF54285">
    <property type="entry name" value="MoaD/ThiS"/>
    <property type="match status" value="1"/>
</dbReference>
<accession>P45309</accession>
<proteinExistence type="inferred from homology"/>
<reference key="1">
    <citation type="journal article" date="1995" name="Science">
        <title>Whole-genome random sequencing and assembly of Haemophilus influenzae Rd.</title>
        <authorList>
            <person name="Fleischmann R.D."/>
            <person name="Adams M.D."/>
            <person name="White O."/>
            <person name="Clayton R.A."/>
            <person name="Kirkness E.F."/>
            <person name="Kerlavage A.R."/>
            <person name="Bult C.J."/>
            <person name="Tomb J.-F."/>
            <person name="Dougherty B.A."/>
            <person name="Merrick J.M."/>
            <person name="McKenney K."/>
            <person name="Sutton G.G."/>
            <person name="FitzHugh W."/>
            <person name="Fields C.A."/>
            <person name="Gocayne J.D."/>
            <person name="Scott J.D."/>
            <person name="Shirley R."/>
            <person name="Liu L.-I."/>
            <person name="Glodek A."/>
            <person name="Kelley J.M."/>
            <person name="Weidman J.F."/>
            <person name="Phillips C.A."/>
            <person name="Spriggs T."/>
            <person name="Hedblom E."/>
            <person name="Cotton M.D."/>
            <person name="Utterback T.R."/>
            <person name="Hanna M.C."/>
            <person name="Nguyen D.T."/>
            <person name="Saudek D.M."/>
            <person name="Brandon R.C."/>
            <person name="Fine L.D."/>
            <person name="Fritchman J.L."/>
            <person name="Fuhrmann J.L."/>
            <person name="Geoghagen N.S.M."/>
            <person name="Gnehm C.L."/>
            <person name="McDonald L.A."/>
            <person name="Small K.V."/>
            <person name="Fraser C.M."/>
            <person name="Smith H.O."/>
            <person name="Venter J.C."/>
        </authorList>
    </citation>
    <scope>NUCLEOTIDE SEQUENCE [LARGE SCALE GENOMIC DNA]</scope>
    <source>
        <strain>ATCC 51907 / DSM 11121 / KW20 / Rd</strain>
    </source>
</reference>
<reference key="2">
    <citation type="submission" date="1996-09" db="EMBL/GenBank/DDBJ databases">
        <authorList>
            <person name="White O."/>
            <person name="Clayton R.A."/>
            <person name="Kerlavage A.R."/>
            <person name="Fleischmann R.D."/>
        </authorList>
    </citation>
    <scope>SEQUENCE REVISION</scope>
</reference>
<name>MOAD_HAEIN</name>
<feature type="chain" id="PRO_0000209132" description="Molybdopterin synthase sulfur carrier subunit">
    <location>
        <begin position="1"/>
        <end position="81"/>
    </location>
</feature>
<feature type="modified residue" description="1-thioglycine; alternate" evidence="1">
    <location>
        <position position="81"/>
    </location>
</feature>
<feature type="modified residue" description="Glycyl adenylate; alternate" evidence="1">
    <location>
        <position position="81"/>
    </location>
</feature>
<protein>
    <recommendedName>
        <fullName>Molybdopterin synthase sulfur carrier subunit</fullName>
    </recommendedName>
    <alternativeName>
        <fullName>MPT synthase subunit 1</fullName>
    </alternativeName>
    <alternativeName>
        <fullName>Molybdenum cofactor biosynthesis protein D</fullName>
    </alternativeName>
    <alternativeName>
        <fullName>Molybdopterin-converting factor small subunit</fullName>
    </alternativeName>
    <alternativeName>
        <fullName>Molybdopterin-converting factor subunit 1</fullName>
    </alternativeName>
    <alternativeName>
        <fullName>Sulfur carrier protein MoaD</fullName>
    </alternativeName>
</protein>
<comment type="function">
    <text evidence="1">Involved in sulfur transfer in the conversion of molybdopterin precursor Z to molybdopterin.</text>
</comment>
<comment type="pathway">
    <text>Cofactor biosynthesis; molybdopterin biosynthesis.</text>
</comment>
<comment type="subunit">
    <text evidence="1">Heterotetramer of 2 MoaD subunits and 2 MoaE subunits. Forms a stable heterotetrameric complex of 2 MoaD and 2 MoeB during adenylation of MoaD by MoeB. During catalysis MoaD shuttles between the two heterotetrameric complexes (By similarity).</text>
</comment>
<comment type="similarity">
    <text evidence="2">Belongs to the MoaD family.</text>
</comment>
<evidence type="ECO:0000250" key="1"/>
<evidence type="ECO:0000305" key="2"/>
<gene>
    <name type="primary">moaD</name>
    <name type="ordered locus">HI_1674</name>
</gene>